<proteinExistence type="inferred from homology"/>
<evidence type="ECO:0000255" key="1">
    <source>
        <dbReference type="HAMAP-Rule" id="MF_00097"/>
    </source>
</evidence>
<dbReference type="EC" id="2.5.1.3" evidence="1"/>
<dbReference type="EMBL" id="AL935263">
    <property type="protein sequence ID" value="CCC77669.1"/>
    <property type="molecule type" value="Genomic_DNA"/>
</dbReference>
<dbReference type="RefSeq" id="WP_011100887.1">
    <property type="nucleotide sequence ID" value="NC_004567.2"/>
</dbReference>
<dbReference type="RefSeq" id="YP_004888183.1">
    <property type="nucleotide sequence ID" value="NC_004567.2"/>
</dbReference>
<dbReference type="SMR" id="Q890C0"/>
<dbReference type="STRING" id="220668.lp_0115"/>
<dbReference type="EnsemblBacteria" id="CCC77669">
    <property type="protein sequence ID" value="CCC77669"/>
    <property type="gene ID" value="lp_0115"/>
</dbReference>
<dbReference type="KEGG" id="lpl:lp_0115"/>
<dbReference type="PATRIC" id="fig|220668.9.peg.93"/>
<dbReference type="eggNOG" id="COG0352">
    <property type="taxonomic scope" value="Bacteria"/>
</dbReference>
<dbReference type="HOGENOM" id="CLU_018272_3_2_9"/>
<dbReference type="OrthoDB" id="9812206at2"/>
<dbReference type="PhylomeDB" id="Q890C0"/>
<dbReference type="UniPathway" id="UPA00060">
    <property type="reaction ID" value="UER00141"/>
</dbReference>
<dbReference type="Proteomes" id="UP000000432">
    <property type="component" value="Chromosome"/>
</dbReference>
<dbReference type="GO" id="GO:0005737">
    <property type="term" value="C:cytoplasm"/>
    <property type="evidence" value="ECO:0007669"/>
    <property type="project" value="TreeGrafter"/>
</dbReference>
<dbReference type="GO" id="GO:0000287">
    <property type="term" value="F:magnesium ion binding"/>
    <property type="evidence" value="ECO:0007669"/>
    <property type="project" value="UniProtKB-UniRule"/>
</dbReference>
<dbReference type="GO" id="GO:0004789">
    <property type="term" value="F:thiamine-phosphate diphosphorylase activity"/>
    <property type="evidence" value="ECO:0007669"/>
    <property type="project" value="UniProtKB-UniRule"/>
</dbReference>
<dbReference type="GO" id="GO:0009228">
    <property type="term" value="P:thiamine biosynthetic process"/>
    <property type="evidence" value="ECO:0007669"/>
    <property type="project" value="UniProtKB-KW"/>
</dbReference>
<dbReference type="GO" id="GO:0009229">
    <property type="term" value="P:thiamine diphosphate biosynthetic process"/>
    <property type="evidence" value="ECO:0007669"/>
    <property type="project" value="UniProtKB-UniRule"/>
</dbReference>
<dbReference type="CDD" id="cd00564">
    <property type="entry name" value="TMP_TenI"/>
    <property type="match status" value="1"/>
</dbReference>
<dbReference type="FunFam" id="3.20.20.70:FF:000096">
    <property type="entry name" value="Thiamine-phosphate synthase"/>
    <property type="match status" value="1"/>
</dbReference>
<dbReference type="Gene3D" id="3.20.20.70">
    <property type="entry name" value="Aldolase class I"/>
    <property type="match status" value="1"/>
</dbReference>
<dbReference type="HAMAP" id="MF_00097">
    <property type="entry name" value="TMP_synthase"/>
    <property type="match status" value="1"/>
</dbReference>
<dbReference type="InterPro" id="IPR013785">
    <property type="entry name" value="Aldolase_TIM"/>
</dbReference>
<dbReference type="InterPro" id="IPR036206">
    <property type="entry name" value="ThiamineP_synth_sf"/>
</dbReference>
<dbReference type="InterPro" id="IPR022998">
    <property type="entry name" value="ThiamineP_synth_TenI"/>
</dbReference>
<dbReference type="InterPro" id="IPR034291">
    <property type="entry name" value="TMP_synthase"/>
</dbReference>
<dbReference type="NCBIfam" id="TIGR00693">
    <property type="entry name" value="thiE"/>
    <property type="match status" value="1"/>
</dbReference>
<dbReference type="PANTHER" id="PTHR20857">
    <property type="entry name" value="THIAMINE-PHOSPHATE PYROPHOSPHORYLASE"/>
    <property type="match status" value="1"/>
</dbReference>
<dbReference type="PANTHER" id="PTHR20857:SF15">
    <property type="entry name" value="THIAMINE-PHOSPHATE SYNTHASE"/>
    <property type="match status" value="1"/>
</dbReference>
<dbReference type="Pfam" id="PF02581">
    <property type="entry name" value="TMP-TENI"/>
    <property type="match status" value="1"/>
</dbReference>
<dbReference type="SUPFAM" id="SSF51391">
    <property type="entry name" value="Thiamin phosphate synthase"/>
    <property type="match status" value="1"/>
</dbReference>
<gene>
    <name evidence="1" type="primary">thiE</name>
    <name type="ordered locus">lp_0115</name>
</gene>
<feature type="chain" id="PRO_0000157020" description="Thiamine-phosphate synthase">
    <location>
        <begin position="1"/>
        <end position="217"/>
    </location>
</feature>
<feature type="binding site" evidence="1">
    <location>
        <begin position="42"/>
        <end position="46"/>
    </location>
    <ligand>
        <name>4-amino-2-methyl-5-(diphosphooxymethyl)pyrimidine</name>
        <dbReference type="ChEBI" id="CHEBI:57841"/>
    </ligand>
</feature>
<feature type="binding site" evidence="1">
    <location>
        <position position="77"/>
    </location>
    <ligand>
        <name>4-amino-2-methyl-5-(diphosphooxymethyl)pyrimidine</name>
        <dbReference type="ChEBI" id="CHEBI:57841"/>
    </ligand>
</feature>
<feature type="binding site" evidence="1">
    <location>
        <position position="78"/>
    </location>
    <ligand>
        <name>Mg(2+)</name>
        <dbReference type="ChEBI" id="CHEBI:18420"/>
    </ligand>
</feature>
<feature type="binding site" evidence="1">
    <location>
        <position position="97"/>
    </location>
    <ligand>
        <name>Mg(2+)</name>
        <dbReference type="ChEBI" id="CHEBI:18420"/>
    </ligand>
</feature>
<feature type="binding site" evidence="1">
    <location>
        <position position="116"/>
    </location>
    <ligand>
        <name>4-amino-2-methyl-5-(diphosphooxymethyl)pyrimidine</name>
        <dbReference type="ChEBI" id="CHEBI:57841"/>
    </ligand>
</feature>
<feature type="binding site" evidence="1">
    <location>
        <begin position="143"/>
        <end position="145"/>
    </location>
    <ligand>
        <name>2-[(2R,5Z)-2-carboxy-4-methylthiazol-5(2H)-ylidene]ethyl phosphate</name>
        <dbReference type="ChEBI" id="CHEBI:62899"/>
    </ligand>
</feature>
<feature type="binding site" evidence="1">
    <location>
        <position position="146"/>
    </location>
    <ligand>
        <name>4-amino-2-methyl-5-(diphosphooxymethyl)pyrimidine</name>
        <dbReference type="ChEBI" id="CHEBI:57841"/>
    </ligand>
</feature>
<feature type="binding site" evidence="1">
    <location>
        <position position="174"/>
    </location>
    <ligand>
        <name>2-[(2R,5Z)-2-carboxy-4-methylthiazol-5(2H)-ylidene]ethyl phosphate</name>
        <dbReference type="ChEBI" id="CHEBI:62899"/>
    </ligand>
</feature>
<feature type="binding site" evidence="1">
    <location>
        <begin position="194"/>
        <end position="195"/>
    </location>
    <ligand>
        <name>2-[(2R,5Z)-2-carboxy-4-methylthiazol-5(2H)-ylidene]ethyl phosphate</name>
        <dbReference type="ChEBI" id="CHEBI:62899"/>
    </ligand>
</feature>
<accession>Q890C0</accession>
<accession>F9UST8</accession>
<organism>
    <name type="scientific">Lactiplantibacillus plantarum (strain ATCC BAA-793 / NCIMB 8826 / WCFS1)</name>
    <name type="common">Lactobacillus plantarum</name>
    <dbReference type="NCBI Taxonomy" id="220668"/>
    <lineage>
        <taxon>Bacteria</taxon>
        <taxon>Bacillati</taxon>
        <taxon>Bacillota</taxon>
        <taxon>Bacilli</taxon>
        <taxon>Lactobacillales</taxon>
        <taxon>Lactobacillaceae</taxon>
        <taxon>Lactiplantibacillus</taxon>
    </lineage>
</organism>
<protein>
    <recommendedName>
        <fullName evidence="1">Thiamine-phosphate synthase</fullName>
        <shortName evidence="1">TP synthase</shortName>
        <shortName evidence="1">TPS</shortName>
        <ecNumber evidence="1">2.5.1.3</ecNumber>
    </recommendedName>
    <alternativeName>
        <fullName evidence="1">Thiamine-phosphate pyrophosphorylase</fullName>
        <shortName evidence="1">TMP pyrophosphorylase</shortName>
        <shortName evidence="1">TMP-PPase</shortName>
    </alternativeName>
</protein>
<reference key="1">
    <citation type="journal article" date="2003" name="Proc. Natl. Acad. Sci. U.S.A.">
        <title>Complete genome sequence of Lactobacillus plantarum WCFS1.</title>
        <authorList>
            <person name="Kleerebezem M."/>
            <person name="Boekhorst J."/>
            <person name="van Kranenburg R."/>
            <person name="Molenaar D."/>
            <person name="Kuipers O.P."/>
            <person name="Leer R."/>
            <person name="Tarchini R."/>
            <person name="Peters S.A."/>
            <person name="Sandbrink H.M."/>
            <person name="Fiers M.W.E.J."/>
            <person name="Stiekema W."/>
            <person name="Klein Lankhorst R.M."/>
            <person name="Bron P.A."/>
            <person name="Hoffer S.M."/>
            <person name="Nierop Groot M.N."/>
            <person name="Kerkhoven R."/>
            <person name="De Vries M."/>
            <person name="Ursing B."/>
            <person name="De Vos W.M."/>
            <person name="Siezen R.J."/>
        </authorList>
    </citation>
    <scope>NUCLEOTIDE SEQUENCE [LARGE SCALE GENOMIC DNA]</scope>
    <source>
        <strain>ATCC BAA-793 / NCIMB 8826 / WCFS1</strain>
    </source>
</reference>
<reference key="2">
    <citation type="journal article" date="2012" name="J. Bacteriol.">
        <title>Complete resequencing and reannotation of the Lactobacillus plantarum WCFS1 genome.</title>
        <authorList>
            <person name="Siezen R.J."/>
            <person name="Francke C."/>
            <person name="Renckens B."/>
            <person name="Boekhorst J."/>
            <person name="Wels M."/>
            <person name="Kleerebezem M."/>
            <person name="van Hijum S.A."/>
        </authorList>
    </citation>
    <scope>NUCLEOTIDE SEQUENCE [LARGE SCALE GENOMIC DNA]</scope>
    <scope>GENOME REANNOTATION</scope>
    <source>
        <strain>ATCC BAA-793 / NCIMB 8826 / WCFS1</strain>
    </source>
</reference>
<comment type="function">
    <text evidence="1">Condenses 4-methyl-5-(beta-hydroxyethyl)thiazole monophosphate (THZ-P) and 2-methyl-4-amino-5-hydroxymethyl pyrimidine pyrophosphate (HMP-PP) to form thiamine monophosphate (TMP).</text>
</comment>
<comment type="catalytic activity">
    <reaction evidence="1">
        <text>2-[(2R,5Z)-2-carboxy-4-methylthiazol-5(2H)-ylidene]ethyl phosphate + 4-amino-2-methyl-5-(diphosphooxymethyl)pyrimidine + 2 H(+) = thiamine phosphate + CO2 + diphosphate</text>
        <dbReference type="Rhea" id="RHEA:47844"/>
        <dbReference type="ChEBI" id="CHEBI:15378"/>
        <dbReference type="ChEBI" id="CHEBI:16526"/>
        <dbReference type="ChEBI" id="CHEBI:33019"/>
        <dbReference type="ChEBI" id="CHEBI:37575"/>
        <dbReference type="ChEBI" id="CHEBI:57841"/>
        <dbReference type="ChEBI" id="CHEBI:62899"/>
        <dbReference type="EC" id="2.5.1.3"/>
    </reaction>
</comment>
<comment type="catalytic activity">
    <reaction evidence="1">
        <text>2-(2-carboxy-4-methylthiazol-5-yl)ethyl phosphate + 4-amino-2-methyl-5-(diphosphooxymethyl)pyrimidine + 2 H(+) = thiamine phosphate + CO2 + diphosphate</text>
        <dbReference type="Rhea" id="RHEA:47848"/>
        <dbReference type="ChEBI" id="CHEBI:15378"/>
        <dbReference type="ChEBI" id="CHEBI:16526"/>
        <dbReference type="ChEBI" id="CHEBI:33019"/>
        <dbReference type="ChEBI" id="CHEBI:37575"/>
        <dbReference type="ChEBI" id="CHEBI:57841"/>
        <dbReference type="ChEBI" id="CHEBI:62890"/>
        <dbReference type="EC" id="2.5.1.3"/>
    </reaction>
</comment>
<comment type="catalytic activity">
    <reaction evidence="1">
        <text>4-methyl-5-(2-phosphooxyethyl)-thiazole + 4-amino-2-methyl-5-(diphosphooxymethyl)pyrimidine + H(+) = thiamine phosphate + diphosphate</text>
        <dbReference type="Rhea" id="RHEA:22328"/>
        <dbReference type="ChEBI" id="CHEBI:15378"/>
        <dbReference type="ChEBI" id="CHEBI:33019"/>
        <dbReference type="ChEBI" id="CHEBI:37575"/>
        <dbReference type="ChEBI" id="CHEBI:57841"/>
        <dbReference type="ChEBI" id="CHEBI:58296"/>
        <dbReference type="EC" id="2.5.1.3"/>
    </reaction>
</comment>
<comment type="cofactor">
    <cofactor evidence="1">
        <name>Mg(2+)</name>
        <dbReference type="ChEBI" id="CHEBI:18420"/>
    </cofactor>
    <text evidence="1">Binds 1 Mg(2+) ion per subunit.</text>
</comment>
<comment type="pathway">
    <text evidence="1">Cofactor biosynthesis; thiamine diphosphate biosynthesis; thiamine phosphate from 4-amino-2-methyl-5-diphosphomethylpyrimidine and 4-methyl-5-(2-phosphoethyl)-thiazole: step 1/1.</text>
</comment>
<comment type="similarity">
    <text evidence="1">Belongs to the thiamine-phosphate synthase family.</text>
</comment>
<name>THIE_LACPL</name>
<sequence>MTLKFEPTQLRAYFVCGTQDVPGQDLNMVVQTALDAGVTAFQYRDKGNSQLTTVERFALGQQLRERCAQAHVPFIVDDDVELALALQADGIHVGQKDDWVTQVIQRVANQMFVGLSCSTLAEVQIANQLEGIAYLGSGPIFPTTSKADADPVVGLTGLRQLVMTASCPVVAIGGITVAQLPAIAATGAAGAAVISMLTRSPDMAATVKAMLTATEGH</sequence>
<keyword id="KW-0460">Magnesium</keyword>
<keyword id="KW-0479">Metal-binding</keyword>
<keyword id="KW-1185">Reference proteome</keyword>
<keyword id="KW-0784">Thiamine biosynthesis</keyword>
<keyword id="KW-0808">Transferase</keyword>